<organism>
    <name type="scientific">Lactococcus lactis subsp. cremoris (strain MG1363)</name>
    <dbReference type="NCBI Taxonomy" id="416870"/>
    <lineage>
        <taxon>Bacteria</taxon>
        <taxon>Bacillati</taxon>
        <taxon>Bacillota</taxon>
        <taxon>Bacilli</taxon>
        <taxon>Lactobacillales</taxon>
        <taxon>Streptococcaceae</taxon>
        <taxon>Lactococcus</taxon>
        <taxon>Lactococcus cremoris subsp. cremoris</taxon>
    </lineage>
</organism>
<reference key="1">
    <citation type="journal article" date="2007" name="J. Bacteriol.">
        <title>The complete genome sequence of the lactic acid bacterial paradigm Lactococcus lactis subsp. cremoris MG1363.</title>
        <authorList>
            <person name="Wegmann U."/>
            <person name="O'Connell-Motherway M."/>
            <person name="Zomer A."/>
            <person name="Buist G."/>
            <person name="Shearman C."/>
            <person name="Canchaya C."/>
            <person name="Ventura M."/>
            <person name="Goesmann A."/>
            <person name="Gasson M.J."/>
            <person name="Kuipers O.P."/>
            <person name="van Sinderen D."/>
            <person name="Kok J."/>
        </authorList>
    </citation>
    <scope>NUCLEOTIDE SEQUENCE [LARGE SCALE GENOMIC DNA]</scope>
    <source>
        <strain>MG1363</strain>
    </source>
</reference>
<feature type="chain" id="PRO_1000069105" description="Nucleoside triphosphate/diphosphate phosphatase">
    <location>
        <begin position="1"/>
        <end position="176"/>
    </location>
</feature>
<feature type="active site" description="Proton donor" evidence="1">
    <location>
        <position position="23"/>
    </location>
</feature>
<feature type="binding site" evidence="1">
    <location>
        <position position="87"/>
    </location>
    <ligand>
        <name>Mg(2+)</name>
        <dbReference type="ChEBI" id="CHEBI:18420"/>
        <label>1</label>
    </ligand>
</feature>
<feature type="binding site" evidence="1">
    <location>
        <position position="103"/>
    </location>
    <ligand>
        <name>Mg(2+)</name>
        <dbReference type="ChEBI" id="CHEBI:18420"/>
        <label>1</label>
    </ligand>
</feature>
<feature type="binding site" evidence="1">
    <location>
        <position position="105"/>
    </location>
    <ligand>
        <name>Mg(2+)</name>
        <dbReference type="ChEBI" id="CHEBI:18420"/>
        <label>2</label>
    </ligand>
</feature>
<feature type="binding site" evidence="1">
    <location>
        <position position="107"/>
    </location>
    <ligand>
        <name>Mg(2+)</name>
        <dbReference type="ChEBI" id="CHEBI:18420"/>
        <label>1</label>
    </ligand>
</feature>
<feature type="binding site" evidence="1">
    <location>
        <position position="107"/>
    </location>
    <ligand>
        <name>Mg(2+)</name>
        <dbReference type="ChEBI" id="CHEBI:18420"/>
        <label>2</label>
    </ligand>
</feature>
<feature type="binding site" evidence="1">
    <location>
        <position position="120"/>
    </location>
    <ligand>
        <name>Mg(2+)</name>
        <dbReference type="ChEBI" id="CHEBI:18420"/>
        <label>2</label>
    </ligand>
</feature>
<feature type="binding site" evidence="1">
    <location>
        <position position="123"/>
    </location>
    <ligand>
        <name>Mg(2+)</name>
        <dbReference type="ChEBI" id="CHEBI:18420"/>
        <label>2</label>
    </ligand>
</feature>
<dbReference type="EC" id="3.6.1.15" evidence="1"/>
<dbReference type="EC" id="3.6.1.6" evidence="1"/>
<dbReference type="EMBL" id="AM406671">
    <property type="protein sequence ID" value="CAL98125.1"/>
    <property type="molecule type" value="Genomic_DNA"/>
</dbReference>
<dbReference type="RefSeq" id="WP_011835389.1">
    <property type="nucleotide sequence ID" value="NC_009004.1"/>
</dbReference>
<dbReference type="SMR" id="A2RLF8"/>
<dbReference type="STRING" id="416870.llmg_1550"/>
<dbReference type="KEGG" id="llm:llmg_1550"/>
<dbReference type="eggNOG" id="COG3557">
    <property type="taxonomic scope" value="Bacteria"/>
</dbReference>
<dbReference type="HOGENOM" id="CLU_109787_1_0_9"/>
<dbReference type="OrthoDB" id="1645325at2"/>
<dbReference type="PhylomeDB" id="A2RLF8"/>
<dbReference type="Proteomes" id="UP000000364">
    <property type="component" value="Chromosome"/>
</dbReference>
<dbReference type="GO" id="GO:0000287">
    <property type="term" value="F:magnesium ion binding"/>
    <property type="evidence" value="ECO:0007669"/>
    <property type="project" value="UniProtKB-UniRule"/>
</dbReference>
<dbReference type="GO" id="GO:0017110">
    <property type="term" value="F:nucleoside diphosphate phosphatase activity"/>
    <property type="evidence" value="ECO:0007669"/>
    <property type="project" value="UniProtKB-UniRule"/>
</dbReference>
<dbReference type="GO" id="GO:0017111">
    <property type="term" value="F:ribonucleoside triphosphate phosphatase activity"/>
    <property type="evidence" value="ECO:0007669"/>
    <property type="project" value="UniProtKB-UniRule"/>
</dbReference>
<dbReference type="Gene3D" id="2.40.380.10">
    <property type="entry name" value="FomD-like"/>
    <property type="match status" value="1"/>
</dbReference>
<dbReference type="HAMAP" id="MF_01568">
    <property type="entry name" value="Ntdp"/>
    <property type="match status" value="1"/>
</dbReference>
<dbReference type="InterPro" id="IPR007295">
    <property type="entry name" value="DUF402"/>
</dbReference>
<dbReference type="InterPro" id="IPR035930">
    <property type="entry name" value="FomD-like_sf"/>
</dbReference>
<dbReference type="InterPro" id="IPR050212">
    <property type="entry name" value="Ntdp-like"/>
</dbReference>
<dbReference type="InterPro" id="IPR016882">
    <property type="entry name" value="SA1684"/>
</dbReference>
<dbReference type="NCBIfam" id="NF010183">
    <property type="entry name" value="PRK13662.1"/>
    <property type="match status" value="1"/>
</dbReference>
<dbReference type="PANTHER" id="PTHR39159">
    <property type="match status" value="1"/>
</dbReference>
<dbReference type="PANTHER" id="PTHR39159:SF1">
    <property type="entry name" value="UPF0374 PROTEIN YGAC"/>
    <property type="match status" value="1"/>
</dbReference>
<dbReference type="Pfam" id="PF04167">
    <property type="entry name" value="DUF402"/>
    <property type="match status" value="1"/>
</dbReference>
<dbReference type="PIRSF" id="PIRSF028345">
    <property type="entry name" value="UCP028345"/>
    <property type="match status" value="1"/>
</dbReference>
<dbReference type="SUPFAM" id="SSF159234">
    <property type="entry name" value="FomD-like"/>
    <property type="match status" value="1"/>
</dbReference>
<gene>
    <name type="ordered locus">llmg_1550</name>
</gene>
<sequence>MKIPKEGDFITIQSYKHDGNLHRTWRDTMVLKTNENSIIGVNDHTLVTESDDRRWVTREPAIVYFHKKFWFNIIAMIREEGVSYYCNLASPFVLDNEALKYIDYDLDVKVFKDGEKKLLDVEEYERHRRNMHYPKEIDHILKENVKILVDWINNEKGPFSKEYVEIWYNRYHQLKK</sequence>
<proteinExistence type="inferred from homology"/>
<keyword id="KW-0378">Hydrolase</keyword>
<keyword id="KW-0460">Magnesium</keyword>
<keyword id="KW-0479">Metal-binding</keyword>
<accession>A2RLF8</accession>
<evidence type="ECO:0000255" key="1">
    <source>
        <dbReference type="HAMAP-Rule" id="MF_01568"/>
    </source>
</evidence>
<comment type="function">
    <text evidence="1">Has nucleoside phosphatase activity towards nucleoside triphosphates and nucleoside diphosphates.</text>
</comment>
<comment type="catalytic activity">
    <reaction evidence="1">
        <text>a ribonucleoside 5'-triphosphate + H2O = a ribonucleoside 5'-diphosphate + phosphate + H(+)</text>
        <dbReference type="Rhea" id="RHEA:23680"/>
        <dbReference type="ChEBI" id="CHEBI:15377"/>
        <dbReference type="ChEBI" id="CHEBI:15378"/>
        <dbReference type="ChEBI" id="CHEBI:43474"/>
        <dbReference type="ChEBI" id="CHEBI:57930"/>
        <dbReference type="ChEBI" id="CHEBI:61557"/>
        <dbReference type="EC" id="3.6.1.15"/>
    </reaction>
</comment>
<comment type="catalytic activity">
    <reaction evidence="1">
        <text>a ribonucleoside 5'-diphosphate + H2O = a ribonucleoside 5'-phosphate + phosphate + H(+)</text>
        <dbReference type="Rhea" id="RHEA:36799"/>
        <dbReference type="ChEBI" id="CHEBI:15377"/>
        <dbReference type="ChEBI" id="CHEBI:15378"/>
        <dbReference type="ChEBI" id="CHEBI:43474"/>
        <dbReference type="ChEBI" id="CHEBI:57930"/>
        <dbReference type="ChEBI" id="CHEBI:58043"/>
        <dbReference type="EC" id="3.6.1.6"/>
    </reaction>
</comment>
<comment type="cofactor">
    <cofactor evidence="1">
        <name>Mg(2+)</name>
        <dbReference type="ChEBI" id="CHEBI:18420"/>
    </cofactor>
</comment>
<comment type="similarity">
    <text evidence="1">Belongs to the Ntdp family.</text>
</comment>
<name>NTDP_LACLM</name>
<protein>
    <recommendedName>
        <fullName evidence="1">Nucleoside triphosphate/diphosphate phosphatase</fullName>
        <ecNumber evidence="1">3.6.1.15</ecNumber>
        <ecNumber evidence="1">3.6.1.6</ecNumber>
    </recommendedName>
</protein>